<reference key="1">
    <citation type="submission" date="2009-04" db="EMBL/GenBank/DDBJ databases">
        <title>Genome sequence of Bacillus anthracis A0248.</title>
        <authorList>
            <person name="Dodson R.J."/>
            <person name="Munk A.C."/>
            <person name="Bruce D."/>
            <person name="Detter C."/>
            <person name="Tapia R."/>
            <person name="Sutton G."/>
            <person name="Sims D."/>
            <person name="Brettin T."/>
        </authorList>
    </citation>
    <scope>NUCLEOTIDE SEQUENCE [LARGE SCALE GENOMIC DNA]</scope>
    <source>
        <strain>A0248</strain>
    </source>
</reference>
<keyword id="KW-0963">Cytoplasm</keyword>
<keyword id="KW-0251">Elongation factor</keyword>
<keyword id="KW-0342">GTP-binding</keyword>
<keyword id="KW-0547">Nucleotide-binding</keyword>
<keyword id="KW-0648">Protein biosynthesis</keyword>
<name>EFG_BACAA</name>
<gene>
    <name evidence="1" type="primary">fusA</name>
    <name type="ordered locus">BAA_0123</name>
</gene>
<feature type="chain" id="PRO_1000201432" description="Elongation factor G">
    <location>
        <begin position="1"/>
        <end position="692"/>
    </location>
</feature>
<feature type="domain" description="tr-type G">
    <location>
        <begin position="8"/>
        <end position="282"/>
    </location>
</feature>
<feature type="binding site" evidence="1">
    <location>
        <begin position="17"/>
        <end position="24"/>
    </location>
    <ligand>
        <name>GTP</name>
        <dbReference type="ChEBI" id="CHEBI:37565"/>
    </ligand>
</feature>
<feature type="binding site" evidence="1">
    <location>
        <begin position="81"/>
        <end position="85"/>
    </location>
    <ligand>
        <name>GTP</name>
        <dbReference type="ChEBI" id="CHEBI:37565"/>
    </ligand>
</feature>
<feature type="binding site" evidence="1">
    <location>
        <begin position="135"/>
        <end position="138"/>
    </location>
    <ligand>
        <name>GTP</name>
        <dbReference type="ChEBI" id="CHEBI:37565"/>
    </ligand>
</feature>
<accession>C3P9Q2</accession>
<proteinExistence type="inferred from homology"/>
<evidence type="ECO:0000255" key="1">
    <source>
        <dbReference type="HAMAP-Rule" id="MF_00054"/>
    </source>
</evidence>
<dbReference type="EMBL" id="CP001598">
    <property type="protein sequence ID" value="ACQ46917.1"/>
    <property type="molecule type" value="Genomic_DNA"/>
</dbReference>
<dbReference type="RefSeq" id="WP_000090364.1">
    <property type="nucleotide sequence ID" value="NC_012659.1"/>
</dbReference>
<dbReference type="SMR" id="C3P9Q2"/>
<dbReference type="GeneID" id="45020152"/>
<dbReference type="KEGG" id="bai:BAA_0123"/>
<dbReference type="HOGENOM" id="CLU_002794_4_1_9"/>
<dbReference type="GO" id="GO:0005737">
    <property type="term" value="C:cytoplasm"/>
    <property type="evidence" value="ECO:0007669"/>
    <property type="project" value="UniProtKB-SubCell"/>
</dbReference>
<dbReference type="GO" id="GO:0005525">
    <property type="term" value="F:GTP binding"/>
    <property type="evidence" value="ECO:0007669"/>
    <property type="project" value="UniProtKB-UniRule"/>
</dbReference>
<dbReference type="GO" id="GO:0003924">
    <property type="term" value="F:GTPase activity"/>
    <property type="evidence" value="ECO:0007669"/>
    <property type="project" value="InterPro"/>
</dbReference>
<dbReference type="GO" id="GO:0003746">
    <property type="term" value="F:translation elongation factor activity"/>
    <property type="evidence" value="ECO:0007669"/>
    <property type="project" value="UniProtKB-UniRule"/>
</dbReference>
<dbReference type="GO" id="GO:0032790">
    <property type="term" value="P:ribosome disassembly"/>
    <property type="evidence" value="ECO:0007669"/>
    <property type="project" value="TreeGrafter"/>
</dbReference>
<dbReference type="CDD" id="cd01886">
    <property type="entry name" value="EF-G"/>
    <property type="match status" value="1"/>
</dbReference>
<dbReference type="CDD" id="cd16262">
    <property type="entry name" value="EFG_III"/>
    <property type="match status" value="1"/>
</dbReference>
<dbReference type="CDD" id="cd01434">
    <property type="entry name" value="EFG_mtEFG1_IV"/>
    <property type="match status" value="1"/>
</dbReference>
<dbReference type="CDD" id="cd03713">
    <property type="entry name" value="EFG_mtEFG_C"/>
    <property type="match status" value="1"/>
</dbReference>
<dbReference type="CDD" id="cd04088">
    <property type="entry name" value="EFG_mtEFG_II"/>
    <property type="match status" value="1"/>
</dbReference>
<dbReference type="FunFam" id="2.40.30.10:FF:000006">
    <property type="entry name" value="Elongation factor G"/>
    <property type="match status" value="1"/>
</dbReference>
<dbReference type="FunFam" id="3.30.230.10:FF:000003">
    <property type="entry name" value="Elongation factor G"/>
    <property type="match status" value="1"/>
</dbReference>
<dbReference type="FunFam" id="3.30.70.240:FF:000001">
    <property type="entry name" value="Elongation factor G"/>
    <property type="match status" value="1"/>
</dbReference>
<dbReference type="FunFam" id="3.30.70.870:FF:000001">
    <property type="entry name" value="Elongation factor G"/>
    <property type="match status" value="1"/>
</dbReference>
<dbReference type="FunFam" id="3.40.50.300:FF:000029">
    <property type="entry name" value="Elongation factor G"/>
    <property type="match status" value="1"/>
</dbReference>
<dbReference type="Gene3D" id="3.30.230.10">
    <property type="match status" value="1"/>
</dbReference>
<dbReference type="Gene3D" id="3.30.70.240">
    <property type="match status" value="1"/>
</dbReference>
<dbReference type="Gene3D" id="3.30.70.870">
    <property type="entry name" value="Elongation Factor G (Translational Gtpase), domain 3"/>
    <property type="match status" value="1"/>
</dbReference>
<dbReference type="Gene3D" id="3.40.50.300">
    <property type="entry name" value="P-loop containing nucleotide triphosphate hydrolases"/>
    <property type="match status" value="1"/>
</dbReference>
<dbReference type="Gene3D" id="2.40.30.10">
    <property type="entry name" value="Translation factors"/>
    <property type="match status" value="1"/>
</dbReference>
<dbReference type="HAMAP" id="MF_00054_B">
    <property type="entry name" value="EF_G_EF_2_B"/>
    <property type="match status" value="1"/>
</dbReference>
<dbReference type="InterPro" id="IPR041095">
    <property type="entry name" value="EFG_II"/>
</dbReference>
<dbReference type="InterPro" id="IPR009022">
    <property type="entry name" value="EFG_III"/>
</dbReference>
<dbReference type="InterPro" id="IPR035647">
    <property type="entry name" value="EFG_III/V"/>
</dbReference>
<dbReference type="InterPro" id="IPR047872">
    <property type="entry name" value="EFG_IV"/>
</dbReference>
<dbReference type="InterPro" id="IPR035649">
    <property type="entry name" value="EFG_V"/>
</dbReference>
<dbReference type="InterPro" id="IPR000640">
    <property type="entry name" value="EFG_V-like"/>
</dbReference>
<dbReference type="InterPro" id="IPR004161">
    <property type="entry name" value="EFTu-like_2"/>
</dbReference>
<dbReference type="InterPro" id="IPR031157">
    <property type="entry name" value="G_TR_CS"/>
</dbReference>
<dbReference type="InterPro" id="IPR027417">
    <property type="entry name" value="P-loop_NTPase"/>
</dbReference>
<dbReference type="InterPro" id="IPR020568">
    <property type="entry name" value="Ribosomal_Su5_D2-typ_SF"/>
</dbReference>
<dbReference type="InterPro" id="IPR014721">
    <property type="entry name" value="Ribsml_uS5_D2-typ_fold_subgr"/>
</dbReference>
<dbReference type="InterPro" id="IPR005225">
    <property type="entry name" value="Small_GTP-bd"/>
</dbReference>
<dbReference type="InterPro" id="IPR000795">
    <property type="entry name" value="T_Tr_GTP-bd_dom"/>
</dbReference>
<dbReference type="InterPro" id="IPR009000">
    <property type="entry name" value="Transl_B-barrel_sf"/>
</dbReference>
<dbReference type="InterPro" id="IPR004540">
    <property type="entry name" value="Transl_elong_EFG/EF2"/>
</dbReference>
<dbReference type="InterPro" id="IPR005517">
    <property type="entry name" value="Transl_elong_EFG/EF2_IV"/>
</dbReference>
<dbReference type="NCBIfam" id="TIGR00484">
    <property type="entry name" value="EF-G"/>
    <property type="match status" value="1"/>
</dbReference>
<dbReference type="NCBIfam" id="NF009379">
    <property type="entry name" value="PRK12740.1-3"/>
    <property type="match status" value="1"/>
</dbReference>
<dbReference type="NCBIfam" id="NF009381">
    <property type="entry name" value="PRK12740.1-5"/>
    <property type="match status" value="1"/>
</dbReference>
<dbReference type="NCBIfam" id="NF009891">
    <property type="entry name" value="PRK13351.1-1"/>
    <property type="match status" value="1"/>
</dbReference>
<dbReference type="NCBIfam" id="TIGR00231">
    <property type="entry name" value="small_GTP"/>
    <property type="match status" value="1"/>
</dbReference>
<dbReference type="PANTHER" id="PTHR43261:SF1">
    <property type="entry name" value="RIBOSOME-RELEASING FACTOR 2, MITOCHONDRIAL"/>
    <property type="match status" value="1"/>
</dbReference>
<dbReference type="PANTHER" id="PTHR43261">
    <property type="entry name" value="TRANSLATION ELONGATION FACTOR G-RELATED"/>
    <property type="match status" value="1"/>
</dbReference>
<dbReference type="Pfam" id="PF00679">
    <property type="entry name" value="EFG_C"/>
    <property type="match status" value="1"/>
</dbReference>
<dbReference type="Pfam" id="PF14492">
    <property type="entry name" value="EFG_III"/>
    <property type="match status" value="1"/>
</dbReference>
<dbReference type="Pfam" id="PF03764">
    <property type="entry name" value="EFG_IV"/>
    <property type="match status" value="1"/>
</dbReference>
<dbReference type="Pfam" id="PF00009">
    <property type="entry name" value="GTP_EFTU"/>
    <property type="match status" value="1"/>
</dbReference>
<dbReference type="Pfam" id="PF03144">
    <property type="entry name" value="GTP_EFTU_D2"/>
    <property type="match status" value="1"/>
</dbReference>
<dbReference type="PRINTS" id="PR00315">
    <property type="entry name" value="ELONGATNFCT"/>
</dbReference>
<dbReference type="SMART" id="SM00838">
    <property type="entry name" value="EFG_C"/>
    <property type="match status" value="1"/>
</dbReference>
<dbReference type="SMART" id="SM00889">
    <property type="entry name" value="EFG_IV"/>
    <property type="match status" value="1"/>
</dbReference>
<dbReference type="SUPFAM" id="SSF54980">
    <property type="entry name" value="EF-G C-terminal domain-like"/>
    <property type="match status" value="2"/>
</dbReference>
<dbReference type="SUPFAM" id="SSF52540">
    <property type="entry name" value="P-loop containing nucleoside triphosphate hydrolases"/>
    <property type="match status" value="1"/>
</dbReference>
<dbReference type="SUPFAM" id="SSF54211">
    <property type="entry name" value="Ribosomal protein S5 domain 2-like"/>
    <property type="match status" value="1"/>
</dbReference>
<dbReference type="SUPFAM" id="SSF50447">
    <property type="entry name" value="Translation proteins"/>
    <property type="match status" value="1"/>
</dbReference>
<dbReference type="PROSITE" id="PS00301">
    <property type="entry name" value="G_TR_1"/>
    <property type="match status" value="1"/>
</dbReference>
<dbReference type="PROSITE" id="PS51722">
    <property type="entry name" value="G_TR_2"/>
    <property type="match status" value="1"/>
</dbReference>
<comment type="function">
    <text evidence="1">Catalyzes the GTP-dependent ribosomal translocation step during translation elongation. During this step, the ribosome changes from the pre-translocational (PRE) to the post-translocational (POST) state as the newly formed A-site-bound peptidyl-tRNA and P-site-bound deacylated tRNA move to the P and E sites, respectively. Catalyzes the coordinated movement of the two tRNA molecules, the mRNA and conformational changes in the ribosome.</text>
</comment>
<comment type="subcellular location">
    <subcellularLocation>
        <location evidence="1">Cytoplasm</location>
    </subcellularLocation>
</comment>
<comment type="similarity">
    <text evidence="1">Belongs to the TRAFAC class translation factor GTPase superfamily. Classic translation factor GTPase family. EF-G/EF-2 subfamily.</text>
</comment>
<sequence length="692" mass="76336">MAREFSLENTRNIGIMAHIDAGKTTATERILYYTGRIHKIGETHEGASQMDWMEQEQERGITITSAATTAQWKGHRVNIIDTPGHVDFTVEVERSLRVLDGAVAVLDAQSGVEPQTETVWRQATTYGVPRIVFVNKMDKIGADFLYSVGTIHDRLQANAHPIQLPIGAEDEFNGIIDLVEECAYMYGNDLGTDIQRVEIPEEHKELAEEYRGKLIEAVAELDEEMMMKYLEGEEITVEELKAGIRKATTSVEFFPVICGSAFKNKGVQILLDAVIDYLPSPLDVPAIKGIVPDTDEEVERKSSDEEPFAALAFKIMTDPYVGKLTFFRVYSGVLNSGSYVKNSTKGKRERVGRILQMHANSREEISTVYAGDIAAAVGLKDTTTGDTLCDEKSLVILESMEFPEPVISVAIEPKSKADQDKMGTALSKLSEEDPTFRAHTDQETGQTIIAGMGELHLDIIVDRMRREFKVEANVGAPQVAYRETFRAAAKVEGKFARQSGGRGQFGHVWIEFEPNEEGKGFEFENKIVGGVVPREYIPAVGAGLEDALKNGVLAGYPVVDIKAALVDGSYHDVDSSEMAFKIAASMALKAAVSKCNPVILEPMMKVEVVIPEEYMGDIMGDVTSRRGRVEGMEARGNAQVVRAMVPLSEMFGYATSLRSNTQGRGTFSMVFDHYEEVPKSVSEEIIKKNKGE</sequence>
<organism>
    <name type="scientific">Bacillus anthracis (strain A0248)</name>
    <dbReference type="NCBI Taxonomy" id="592021"/>
    <lineage>
        <taxon>Bacteria</taxon>
        <taxon>Bacillati</taxon>
        <taxon>Bacillota</taxon>
        <taxon>Bacilli</taxon>
        <taxon>Bacillales</taxon>
        <taxon>Bacillaceae</taxon>
        <taxon>Bacillus</taxon>
        <taxon>Bacillus cereus group</taxon>
    </lineage>
</organism>
<protein>
    <recommendedName>
        <fullName evidence="1">Elongation factor G</fullName>
        <shortName evidence="1">EF-G</shortName>
    </recommendedName>
</protein>